<reference key="1">
    <citation type="journal article" date="2002" name="Nature">
        <title>Sequence and analysis of chromosome 2 of Dictyostelium discoideum.</title>
        <authorList>
            <person name="Gloeckner G."/>
            <person name="Eichinger L."/>
            <person name="Szafranski K."/>
            <person name="Pachebat J.A."/>
            <person name="Bankier A.T."/>
            <person name="Dear P.H."/>
            <person name="Lehmann R."/>
            <person name="Baumgart C."/>
            <person name="Parra G."/>
            <person name="Abril J.F."/>
            <person name="Guigo R."/>
            <person name="Kumpf K."/>
            <person name="Tunggal B."/>
            <person name="Cox E.C."/>
            <person name="Quail M.A."/>
            <person name="Platzer M."/>
            <person name="Rosenthal A."/>
            <person name="Noegel A.A."/>
        </authorList>
    </citation>
    <scope>NUCLEOTIDE SEQUENCE [LARGE SCALE GENOMIC DNA]</scope>
    <source>
        <strain>AX4</strain>
    </source>
</reference>
<reference key="2">
    <citation type="journal article" date="2005" name="Nature">
        <title>The genome of the social amoeba Dictyostelium discoideum.</title>
        <authorList>
            <person name="Eichinger L."/>
            <person name="Pachebat J.A."/>
            <person name="Gloeckner G."/>
            <person name="Rajandream M.A."/>
            <person name="Sucgang R."/>
            <person name="Berriman M."/>
            <person name="Song J."/>
            <person name="Olsen R."/>
            <person name="Szafranski K."/>
            <person name="Xu Q."/>
            <person name="Tunggal B."/>
            <person name="Kummerfeld S."/>
            <person name="Madera M."/>
            <person name="Konfortov B.A."/>
            <person name="Rivero F."/>
            <person name="Bankier A.T."/>
            <person name="Lehmann R."/>
            <person name="Hamlin N."/>
            <person name="Davies R."/>
            <person name="Gaudet P."/>
            <person name="Fey P."/>
            <person name="Pilcher K."/>
            <person name="Chen G."/>
            <person name="Saunders D."/>
            <person name="Sodergren E.J."/>
            <person name="Davis P."/>
            <person name="Kerhornou A."/>
            <person name="Nie X."/>
            <person name="Hall N."/>
            <person name="Anjard C."/>
            <person name="Hemphill L."/>
            <person name="Bason N."/>
            <person name="Farbrother P."/>
            <person name="Desany B."/>
            <person name="Just E."/>
            <person name="Morio T."/>
            <person name="Rost R."/>
            <person name="Churcher C.M."/>
            <person name="Cooper J."/>
            <person name="Haydock S."/>
            <person name="van Driessche N."/>
            <person name="Cronin A."/>
            <person name="Goodhead I."/>
            <person name="Muzny D.M."/>
            <person name="Mourier T."/>
            <person name="Pain A."/>
            <person name="Lu M."/>
            <person name="Harper D."/>
            <person name="Lindsay R."/>
            <person name="Hauser H."/>
            <person name="James K.D."/>
            <person name="Quiles M."/>
            <person name="Madan Babu M."/>
            <person name="Saito T."/>
            <person name="Buchrieser C."/>
            <person name="Wardroper A."/>
            <person name="Felder M."/>
            <person name="Thangavelu M."/>
            <person name="Johnson D."/>
            <person name="Knights A."/>
            <person name="Loulseged H."/>
            <person name="Mungall K.L."/>
            <person name="Oliver K."/>
            <person name="Price C."/>
            <person name="Quail M.A."/>
            <person name="Urushihara H."/>
            <person name="Hernandez J."/>
            <person name="Rabbinowitsch E."/>
            <person name="Steffen D."/>
            <person name="Sanders M."/>
            <person name="Ma J."/>
            <person name="Kohara Y."/>
            <person name="Sharp S."/>
            <person name="Simmonds M.N."/>
            <person name="Spiegler S."/>
            <person name="Tivey A."/>
            <person name="Sugano S."/>
            <person name="White B."/>
            <person name="Walker D."/>
            <person name="Woodward J.R."/>
            <person name="Winckler T."/>
            <person name="Tanaka Y."/>
            <person name="Shaulsky G."/>
            <person name="Schleicher M."/>
            <person name="Weinstock G.M."/>
            <person name="Rosenthal A."/>
            <person name="Cox E.C."/>
            <person name="Chisholm R.L."/>
            <person name="Gibbs R.A."/>
            <person name="Loomis W.F."/>
            <person name="Platzer M."/>
            <person name="Kay R.R."/>
            <person name="Williams J.G."/>
            <person name="Dear P.H."/>
            <person name="Noegel A.A."/>
            <person name="Barrell B.G."/>
            <person name="Kuspa A."/>
        </authorList>
    </citation>
    <scope>NUCLEOTIDE SEQUENCE [LARGE SCALE GENOMIC DNA]</scope>
    <source>
        <strain>AX4</strain>
    </source>
</reference>
<accession>Q86IW1</accession>
<accession>Q556B7</accession>
<organism>
    <name type="scientific">Dictyostelium discoideum</name>
    <name type="common">Social amoeba</name>
    <dbReference type="NCBI Taxonomy" id="44689"/>
    <lineage>
        <taxon>Eukaryota</taxon>
        <taxon>Amoebozoa</taxon>
        <taxon>Evosea</taxon>
        <taxon>Eumycetozoa</taxon>
        <taxon>Dictyostelia</taxon>
        <taxon>Dictyosteliales</taxon>
        <taxon>Dictyosteliaceae</taxon>
        <taxon>Dictyostelium</taxon>
    </lineage>
</organism>
<name>Y7918_DICDI</name>
<gene>
    <name type="ORF">DDB_G0274353</name>
</gene>
<proteinExistence type="predicted"/>
<sequence length="393" mass="43803">MPNRSFSPRTFMGDHGISIDYNNLEKIVAPKPWKPSHSRSTSTNCTKFVEESLFEEAGNEIQTIILHSFNIYDDSVDSNNNNNNNNNNNNNNKNDDYNFQPPIRQSLSSPQQLVSIRPTPTKPKLVSFLNNNSKVNNNNNNNKTIMTCKVNSKNNINSLVNNNNSKIAINIESCSNLRNNEIQIDDNENINTEYITPNNIVNNILKCKLETQTPTSSQPQTISFLDTFESRVSISPSYNNGQGAISGSEKGSEIITTIINNNNNNNNNNSNNNNNNNNSNNNDNNNNINTKVDESNSNDNILLSQTIDTITENHSDGTLDMKIPLFIHSYSPLNCFNGSEPLTPPIRTHNPITMNQAFTESDLFQQGAELGLLSISPPPTLSISKQFKSATLF</sequence>
<feature type="chain" id="PRO_0000348148" description="Uncharacterized protein DDB_G0274353">
    <location>
        <begin position="1"/>
        <end position="393"/>
    </location>
</feature>
<feature type="region of interest" description="Disordered" evidence="1">
    <location>
        <begin position="77"/>
        <end position="118"/>
    </location>
</feature>
<feature type="region of interest" description="Disordered" evidence="1">
    <location>
        <begin position="259"/>
        <end position="296"/>
    </location>
</feature>
<feature type="compositionally biased region" description="Low complexity" evidence="1">
    <location>
        <begin position="79"/>
        <end position="92"/>
    </location>
</feature>
<feature type="compositionally biased region" description="Polar residues" evidence="1">
    <location>
        <begin position="103"/>
        <end position="114"/>
    </location>
</feature>
<feature type="compositionally biased region" description="Low complexity" evidence="1">
    <location>
        <begin position="259"/>
        <end position="289"/>
    </location>
</feature>
<evidence type="ECO:0000256" key="1">
    <source>
        <dbReference type="SAM" id="MobiDB-lite"/>
    </source>
</evidence>
<keyword id="KW-1185">Reference proteome</keyword>
<dbReference type="EMBL" id="AAFI02000012">
    <property type="protein sequence ID" value="EAL70069.1"/>
    <property type="molecule type" value="Genomic_DNA"/>
</dbReference>
<dbReference type="RefSeq" id="XP_643893.1">
    <property type="nucleotide sequence ID" value="XM_638801.1"/>
</dbReference>
<dbReference type="FunCoup" id="Q86IW1">
    <property type="interactions" value="435"/>
</dbReference>
<dbReference type="GlyGen" id="Q86IW1">
    <property type="glycosylation" value="1 site"/>
</dbReference>
<dbReference type="PaxDb" id="44689-DDB0167918"/>
<dbReference type="EnsemblProtists" id="EAL70069">
    <property type="protein sequence ID" value="EAL70069"/>
    <property type="gene ID" value="DDB_G0274353"/>
</dbReference>
<dbReference type="GeneID" id="8619319"/>
<dbReference type="KEGG" id="ddi:DDB_G0274353"/>
<dbReference type="dictyBase" id="DDB_G0274353"/>
<dbReference type="VEuPathDB" id="AmoebaDB:DDB_G0274353"/>
<dbReference type="eggNOG" id="ENOG502RHXE">
    <property type="taxonomic scope" value="Eukaryota"/>
</dbReference>
<dbReference type="HOGENOM" id="CLU_702889_0_0_1"/>
<dbReference type="InParanoid" id="Q86IW1"/>
<dbReference type="OMA" id="KPWKPSH"/>
<dbReference type="PRO" id="PR:Q86IW1"/>
<dbReference type="Proteomes" id="UP000002195">
    <property type="component" value="Chromosome 2"/>
</dbReference>
<protein>
    <recommendedName>
        <fullName>Uncharacterized protein DDB_G0274353</fullName>
    </recommendedName>
</protein>